<comment type="function">
    <text evidence="1">Catalyzes the formation of a hydroxyacyl-CoA by addition of water on enoyl-CoA. Also exhibits 3-hydroxyacyl-CoA epimerase and 3-hydroxyacyl-CoA dehydrogenase activities.</text>
</comment>
<comment type="catalytic activity">
    <reaction evidence="1">
        <text>a (3S)-3-hydroxyacyl-CoA = a (2E)-enoyl-CoA + H2O</text>
        <dbReference type="Rhea" id="RHEA:16105"/>
        <dbReference type="ChEBI" id="CHEBI:15377"/>
        <dbReference type="ChEBI" id="CHEBI:57318"/>
        <dbReference type="ChEBI" id="CHEBI:58856"/>
        <dbReference type="EC" id="4.2.1.17"/>
    </reaction>
</comment>
<comment type="catalytic activity">
    <reaction evidence="1">
        <text>a 4-saturated-(3S)-3-hydroxyacyl-CoA = a (3E)-enoyl-CoA + H2O</text>
        <dbReference type="Rhea" id="RHEA:20724"/>
        <dbReference type="ChEBI" id="CHEBI:15377"/>
        <dbReference type="ChEBI" id="CHEBI:58521"/>
        <dbReference type="ChEBI" id="CHEBI:137480"/>
        <dbReference type="EC" id="4.2.1.17"/>
    </reaction>
</comment>
<comment type="catalytic activity">
    <reaction evidence="1">
        <text>a (3S)-3-hydroxyacyl-CoA + NAD(+) = a 3-oxoacyl-CoA + NADH + H(+)</text>
        <dbReference type="Rhea" id="RHEA:22432"/>
        <dbReference type="ChEBI" id="CHEBI:15378"/>
        <dbReference type="ChEBI" id="CHEBI:57318"/>
        <dbReference type="ChEBI" id="CHEBI:57540"/>
        <dbReference type="ChEBI" id="CHEBI:57945"/>
        <dbReference type="ChEBI" id="CHEBI:90726"/>
        <dbReference type="EC" id="1.1.1.35"/>
    </reaction>
</comment>
<comment type="catalytic activity">
    <reaction evidence="1">
        <text>(3S)-3-hydroxybutanoyl-CoA = (3R)-3-hydroxybutanoyl-CoA</text>
        <dbReference type="Rhea" id="RHEA:21760"/>
        <dbReference type="ChEBI" id="CHEBI:57315"/>
        <dbReference type="ChEBI" id="CHEBI:57316"/>
        <dbReference type="EC" id="5.1.2.3"/>
    </reaction>
</comment>
<comment type="pathway">
    <text evidence="1">Lipid metabolism; fatty acid beta-oxidation.</text>
</comment>
<comment type="subunit">
    <text evidence="1">Heterotetramer of two alpha chains (FadJ) and two beta chains (FadI).</text>
</comment>
<comment type="subcellular location">
    <subcellularLocation>
        <location evidence="1">Cytoplasm</location>
    </subcellularLocation>
</comment>
<comment type="similarity">
    <text evidence="1">In the N-terminal section; belongs to the enoyl-CoA hydratase/isomerase family.</text>
</comment>
<comment type="similarity">
    <text evidence="1">In the central section; belongs to the 3-hydroxyacyl-CoA dehydrogenase family.</text>
</comment>
<accession>B7M6M2</accession>
<proteinExistence type="inferred from homology"/>
<reference key="1">
    <citation type="journal article" date="2009" name="PLoS Genet.">
        <title>Organised genome dynamics in the Escherichia coli species results in highly diverse adaptive paths.</title>
        <authorList>
            <person name="Touchon M."/>
            <person name="Hoede C."/>
            <person name="Tenaillon O."/>
            <person name="Barbe V."/>
            <person name="Baeriswyl S."/>
            <person name="Bidet P."/>
            <person name="Bingen E."/>
            <person name="Bonacorsi S."/>
            <person name="Bouchier C."/>
            <person name="Bouvet O."/>
            <person name="Calteau A."/>
            <person name="Chiapello H."/>
            <person name="Clermont O."/>
            <person name="Cruveiller S."/>
            <person name="Danchin A."/>
            <person name="Diard M."/>
            <person name="Dossat C."/>
            <person name="Karoui M.E."/>
            <person name="Frapy E."/>
            <person name="Garry L."/>
            <person name="Ghigo J.M."/>
            <person name="Gilles A.M."/>
            <person name="Johnson J."/>
            <person name="Le Bouguenec C."/>
            <person name="Lescat M."/>
            <person name="Mangenot S."/>
            <person name="Martinez-Jehanne V."/>
            <person name="Matic I."/>
            <person name="Nassif X."/>
            <person name="Oztas S."/>
            <person name="Petit M.A."/>
            <person name="Pichon C."/>
            <person name="Rouy Z."/>
            <person name="Ruf C.S."/>
            <person name="Schneider D."/>
            <person name="Tourret J."/>
            <person name="Vacherie B."/>
            <person name="Vallenet D."/>
            <person name="Medigue C."/>
            <person name="Rocha E.P.C."/>
            <person name="Denamur E."/>
        </authorList>
    </citation>
    <scope>NUCLEOTIDE SEQUENCE [LARGE SCALE GENOMIC DNA]</scope>
    <source>
        <strain>IAI1</strain>
    </source>
</reference>
<gene>
    <name evidence="1" type="primary">fadJ</name>
    <name type="ordered locus">ECIAI1_2418</name>
</gene>
<name>FADJ_ECO8A</name>
<dbReference type="EC" id="4.2.1.17" evidence="1"/>
<dbReference type="EC" id="5.1.2.3" evidence="1"/>
<dbReference type="EC" id="1.1.1.35" evidence="1"/>
<dbReference type="EMBL" id="CU928160">
    <property type="protein sequence ID" value="CAQ99260.1"/>
    <property type="molecule type" value="Genomic_DNA"/>
</dbReference>
<dbReference type="RefSeq" id="WP_000426164.1">
    <property type="nucleotide sequence ID" value="NC_011741.1"/>
</dbReference>
<dbReference type="SMR" id="B7M6M2"/>
<dbReference type="KEGG" id="ecr:ECIAI1_2418"/>
<dbReference type="HOGENOM" id="CLU_009834_16_1_6"/>
<dbReference type="UniPathway" id="UPA00659"/>
<dbReference type="GO" id="GO:0005737">
    <property type="term" value="C:cytoplasm"/>
    <property type="evidence" value="ECO:0007669"/>
    <property type="project" value="UniProtKB-SubCell"/>
</dbReference>
<dbReference type="GO" id="GO:0008692">
    <property type="term" value="F:3-hydroxybutyryl-CoA epimerase activity"/>
    <property type="evidence" value="ECO:0007669"/>
    <property type="project" value="UniProtKB-UniRule"/>
</dbReference>
<dbReference type="GO" id="GO:0004300">
    <property type="term" value="F:enoyl-CoA hydratase activity"/>
    <property type="evidence" value="ECO:0007669"/>
    <property type="project" value="UniProtKB-UniRule"/>
</dbReference>
<dbReference type="GO" id="GO:0016509">
    <property type="term" value="F:long-chain-3-hydroxyacyl-CoA dehydrogenase activity"/>
    <property type="evidence" value="ECO:0007669"/>
    <property type="project" value="TreeGrafter"/>
</dbReference>
<dbReference type="GO" id="GO:0070403">
    <property type="term" value="F:NAD+ binding"/>
    <property type="evidence" value="ECO:0007669"/>
    <property type="project" value="InterPro"/>
</dbReference>
<dbReference type="GO" id="GO:0006635">
    <property type="term" value="P:fatty acid beta-oxidation"/>
    <property type="evidence" value="ECO:0007669"/>
    <property type="project" value="UniProtKB-UniRule"/>
</dbReference>
<dbReference type="CDD" id="cd06558">
    <property type="entry name" value="crotonase-like"/>
    <property type="match status" value="1"/>
</dbReference>
<dbReference type="FunFam" id="1.10.1040.50:FF:000003">
    <property type="entry name" value="Fatty acid oxidation complex subunit alpha"/>
    <property type="match status" value="1"/>
</dbReference>
<dbReference type="FunFam" id="3.90.226.10:FF:000011">
    <property type="entry name" value="Fatty acid oxidation complex subunit alpha"/>
    <property type="match status" value="1"/>
</dbReference>
<dbReference type="FunFam" id="3.40.50.720:FF:000009">
    <property type="entry name" value="Fatty oxidation complex, alpha subunit"/>
    <property type="match status" value="1"/>
</dbReference>
<dbReference type="Gene3D" id="1.10.1040.50">
    <property type="match status" value="1"/>
</dbReference>
<dbReference type="Gene3D" id="3.90.226.10">
    <property type="entry name" value="2-enoyl-CoA Hydratase, Chain A, domain 1"/>
    <property type="match status" value="1"/>
</dbReference>
<dbReference type="Gene3D" id="3.40.50.720">
    <property type="entry name" value="NAD(P)-binding Rossmann-like Domain"/>
    <property type="match status" value="1"/>
</dbReference>
<dbReference type="HAMAP" id="MF_01617">
    <property type="entry name" value="FadJ"/>
    <property type="match status" value="1"/>
</dbReference>
<dbReference type="InterPro" id="IPR006180">
    <property type="entry name" value="3-OHacyl-CoA_DH_CS"/>
</dbReference>
<dbReference type="InterPro" id="IPR006176">
    <property type="entry name" value="3-OHacyl-CoA_DH_NAD-bd"/>
</dbReference>
<dbReference type="InterPro" id="IPR006108">
    <property type="entry name" value="3HC_DH_C"/>
</dbReference>
<dbReference type="InterPro" id="IPR008927">
    <property type="entry name" value="6-PGluconate_DH-like_C_sf"/>
</dbReference>
<dbReference type="InterPro" id="IPR029045">
    <property type="entry name" value="ClpP/crotonase-like_dom_sf"/>
</dbReference>
<dbReference type="InterPro" id="IPR001753">
    <property type="entry name" value="Enoyl-CoA_hydra/iso"/>
</dbReference>
<dbReference type="InterPro" id="IPR050136">
    <property type="entry name" value="FA_oxidation_alpha_subunit"/>
</dbReference>
<dbReference type="InterPro" id="IPR012802">
    <property type="entry name" value="FadJ"/>
</dbReference>
<dbReference type="InterPro" id="IPR036291">
    <property type="entry name" value="NAD(P)-bd_dom_sf"/>
</dbReference>
<dbReference type="NCBIfam" id="TIGR02440">
    <property type="entry name" value="FadJ"/>
    <property type="match status" value="1"/>
</dbReference>
<dbReference type="NCBIfam" id="NF008363">
    <property type="entry name" value="PRK11154.1"/>
    <property type="match status" value="1"/>
</dbReference>
<dbReference type="PANTHER" id="PTHR43612">
    <property type="entry name" value="TRIFUNCTIONAL ENZYME SUBUNIT ALPHA"/>
    <property type="match status" value="1"/>
</dbReference>
<dbReference type="PANTHER" id="PTHR43612:SF3">
    <property type="entry name" value="TRIFUNCTIONAL ENZYME SUBUNIT ALPHA, MITOCHONDRIAL"/>
    <property type="match status" value="1"/>
</dbReference>
<dbReference type="Pfam" id="PF00725">
    <property type="entry name" value="3HCDH"/>
    <property type="match status" value="2"/>
</dbReference>
<dbReference type="Pfam" id="PF02737">
    <property type="entry name" value="3HCDH_N"/>
    <property type="match status" value="1"/>
</dbReference>
<dbReference type="Pfam" id="PF00378">
    <property type="entry name" value="ECH_1"/>
    <property type="match status" value="1"/>
</dbReference>
<dbReference type="SUPFAM" id="SSF48179">
    <property type="entry name" value="6-phosphogluconate dehydrogenase C-terminal domain-like"/>
    <property type="match status" value="2"/>
</dbReference>
<dbReference type="SUPFAM" id="SSF52096">
    <property type="entry name" value="ClpP/crotonase"/>
    <property type="match status" value="1"/>
</dbReference>
<dbReference type="SUPFAM" id="SSF51735">
    <property type="entry name" value="NAD(P)-binding Rossmann-fold domains"/>
    <property type="match status" value="1"/>
</dbReference>
<dbReference type="PROSITE" id="PS00067">
    <property type="entry name" value="3HCDH"/>
    <property type="match status" value="1"/>
</dbReference>
<evidence type="ECO:0000255" key="1">
    <source>
        <dbReference type="HAMAP-Rule" id="MF_01617"/>
    </source>
</evidence>
<feature type="chain" id="PRO_1000185940" description="Fatty acid oxidation complex subunit alpha">
    <location>
        <begin position="1"/>
        <end position="714"/>
    </location>
</feature>
<feature type="region of interest" description="Enoyl-CoA hydratase" evidence="1">
    <location>
        <begin position="1"/>
        <end position="190"/>
    </location>
</feature>
<feature type="region of interest" description="3-hydroxyacyl-CoA dehydrogenase" evidence="1">
    <location>
        <begin position="306"/>
        <end position="714"/>
    </location>
</feature>
<feature type="site" description="Important for catalytic activity" evidence="1">
    <location>
        <position position="118"/>
    </location>
</feature>
<feature type="site" description="Important for catalytic activity" evidence="1">
    <location>
        <position position="140"/>
    </location>
</feature>
<organism>
    <name type="scientific">Escherichia coli O8 (strain IAI1)</name>
    <dbReference type="NCBI Taxonomy" id="585034"/>
    <lineage>
        <taxon>Bacteria</taxon>
        <taxon>Pseudomonadati</taxon>
        <taxon>Pseudomonadota</taxon>
        <taxon>Gammaproteobacteria</taxon>
        <taxon>Enterobacterales</taxon>
        <taxon>Enterobacteriaceae</taxon>
        <taxon>Escherichia</taxon>
    </lineage>
</organism>
<sequence>MEMTSAFTLNVRLDNIAVITIDVPGEKMNTLKAEFASQVRAIIKQLRENKELRGVVFVSAKPDNFIAGADINMIGNCKTAQEAEALARQGQQLMAEIHALPIPVIAAIHGACLGGGLELALACHGRVCTDDPKTVLGLPEVQLGLLPGSGGTQRLPRLIGVSTALEMILTGKQLRAKQALKLGLVDDVVPHSILLEVAVELAKKDRPSSRPLPVRERILAGPLGRALLFKMVGKKTEHKTQGNYPATERILEVVETGLAQGTSSGYDAEARAFGELAMTPQSQALRSIFFASTDVKKDPGSDAPPAPLNSVGILGGGLMGGGIAYVTACKAGLPVRIKDINPQGINHALKYSWDQLEGKVRRRHLKASERDKQLALISGTTDYRGFAHRDLIIEAVFENLELKQQMVAEVEQNSAAHTIFASNTSSLPIGDIAAHATRPEQVIGLHFFSPVEKMPLVEIIPHAGTSAQTIATTVKLAKKQGKTPIVVRDKAGFYVNRILAPYINEAIRMLTEGERVEHIDAALVKFGFPVGPIQLLDEVGIDTGTKIIPVLEAAYGERFSAPANVVSSILNDDRKGRKNGRGFYLYGQKGRKSKKQVDPAIYPLIGAQGQGRLSAPQVAERCVMLMLNEAVRCVDEQVIRSVRDGDIGAVFGIGFPPFLGGPFRYIDSLGAGEVVAIMQRLATQYGSRFTPCERLVEMGARGESFWKTTATDLQ</sequence>
<keyword id="KW-0963">Cytoplasm</keyword>
<keyword id="KW-0276">Fatty acid metabolism</keyword>
<keyword id="KW-0413">Isomerase</keyword>
<keyword id="KW-0442">Lipid degradation</keyword>
<keyword id="KW-0443">Lipid metabolism</keyword>
<keyword id="KW-0456">Lyase</keyword>
<keyword id="KW-0511">Multifunctional enzyme</keyword>
<keyword id="KW-0520">NAD</keyword>
<keyword id="KW-0560">Oxidoreductase</keyword>
<protein>
    <recommendedName>
        <fullName evidence="1">Fatty acid oxidation complex subunit alpha</fullName>
    </recommendedName>
    <domain>
        <recommendedName>
            <fullName evidence="1">Enoyl-CoA hydratase/3-hydroxybutyryl-CoA epimerase</fullName>
            <ecNumber evidence="1">4.2.1.17</ecNumber>
            <ecNumber evidence="1">5.1.2.3</ecNumber>
        </recommendedName>
    </domain>
    <domain>
        <recommendedName>
            <fullName evidence="1">3-hydroxyacyl-CoA dehydrogenase</fullName>
            <ecNumber evidence="1">1.1.1.35</ecNumber>
        </recommendedName>
    </domain>
</protein>